<protein>
    <recommendedName>
        <fullName evidence="1">Mitochondrial distribution and morphology protein 10</fullName>
    </recommendedName>
    <alternativeName>
        <fullName evidence="1">Mitochondrial inheritance component MDM10</fullName>
    </alternativeName>
</protein>
<organism>
    <name type="scientific">Candida glabrata (strain ATCC 2001 / BCRC 20586 / JCM 3761 / NBRC 0622 / NRRL Y-65 / CBS 138)</name>
    <name type="common">Yeast</name>
    <name type="synonym">Nakaseomyces glabratus</name>
    <dbReference type="NCBI Taxonomy" id="284593"/>
    <lineage>
        <taxon>Eukaryota</taxon>
        <taxon>Fungi</taxon>
        <taxon>Dikarya</taxon>
        <taxon>Ascomycota</taxon>
        <taxon>Saccharomycotina</taxon>
        <taxon>Saccharomycetes</taxon>
        <taxon>Saccharomycetales</taxon>
        <taxon>Saccharomycetaceae</taxon>
        <taxon>Nakaseomyces</taxon>
    </lineage>
</organism>
<feature type="chain" id="PRO_0000384171" description="Mitochondrial distribution and morphology protein 10">
    <location>
        <begin position="1"/>
        <end position="460"/>
    </location>
</feature>
<accession>Q6FWV0</accession>
<comment type="function">
    <text evidence="1">Component of the ERMES/MDM complex, which serves as a molecular tether to connect the endoplasmic reticulum and mitochondria. Components of this complex are involved in the control of mitochondrial shape and protein biogenesis and may function in phospholipid exchange. MDM10 is involved in the late assembly steps of the general translocase of the mitochondrial outer membrane (TOM complex). Functions in the TOM40-specific route of the assembly of outer membrane beta-barrel proteins, including the association of TOM40 with the receptor TOM22 and small TOM proteins. Can associate with the SAM(core) complex as well as the MDM12-MMM1 complex, both involved in late steps of the major beta-barrel assembly pathway, that is responsible for biogenesis of all outer membrane beta-barrel proteins. May act as a switch that shuttles between both complexes and channels precursor proteins into the TOM40-specific pathway. Plays a role in mitochondrial morphology and in the inheritance of mitochondria.</text>
</comment>
<comment type="subunit">
    <text evidence="1">Component of the ER-mitochondria encounter structure (ERMES) or MDM complex, composed of MMM1, MDM10, MDM12 and MDM34. Associates with the mitochondrial outer membrane sorting assembly machinery SAM(core) complex.</text>
</comment>
<comment type="subcellular location">
    <subcellularLocation>
        <location evidence="1">Mitochondrion outer membrane</location>
        <topology evidence="1">Multi-pass membrane protein</topology>
    </subcellularLocation>
    <text evidence="1">The ERMES/MDM complex localizes to a few discrete foci (around 10 per single cell), that represent mitochondria-endoplasmic reticulum junctions. These foci are often found next to mtDNA nucleoids.</text>
</comment>
<comment type="domain">
    <text>Lacks alpha-helical transmembrane segments, suggesting that it resides in the membrane via beta-sheet conformations similar to those predicted for other outer membrane proteins and porin.</text>
</comment>
<comment type="similarity">
    <text evidence="1">Belongs to the MDM10 family.</text>
</comment>
<evidence type="ECO:0000255" key="1">
    <source>
        <dbReference type="HAMAP-Rule" id="MF_03102"/>
    </source>
</evidence>
<sequence>MLDYMDYVQQCFDSAGRWKRQNSYGEVTQTPRNLIDFKIPDAVNLQVSNRSTKYSYNSLQLSTRQSINGSLTYLYTNLDAVEGLVKNTEELPLHDIVQTYELPAVTHHRKEKTNFHKCSLFYGKIFYPSSDVEAMMIKRFSPMNQVIVKCLSSLKENVNIFTAYFQRNSEKNFQELIVSSNDLLCGYRISHHFLRTPSKLNSSLYNNSSLFFGAEFWLGMISLNPGCSTSLKYCTHSANTGRPLTLTLSWNPLFGHISTTYSAMTSSSSTFCAKYDFNIYSIESNLSFGIELWRKTGALFKSEDSVEANRKEYEQNFYISHDHNLLPSKYGYDHEYNISDGKLSKEHKRNKIIKDLNHAFSTSLQKIDKEKTRIENFGNIIRNSHFTSVFKASTSLRERNLKFLWEGEYKNFLLSAGTELRVLKAEESELRRTSGQSSNSLLNEFSLQPLKFGVQIQFSS</sequence>
<proteinExistence type="inferred from homology"/>
<name>MDM10_CANGA</name>
<gene>
    <name evidence="1" type="primary">MDM10</name>
    <name type="ordered locus">CAGL0C02695g</name>
</gene>
<keyword id="KW-0472">Membrane</keyword>
<keyword id="KW-0496">Mitochondrion</keyword>
<keyword id="KW-1000">Mitochondrion outer membrane</keyword>
<keyword id="KW-1185">Reference proteome</keyword>
<keyword id="KW-0812">Transmembrane</keyword>
<keyword id="KW-1134">Transmembrane beta strand</keyword>
<dbReference type="EMBL" id="CR380949">
    <property type="protein sequence ID" value="CAG58200.1"/>
    <property type="molecule type" value="Genomic_DNA"/>
</dbReference>
<dbReference type="RefSeq" id="XP_445294.1">
    <property type="nucleotide sequence ID" value="XM_445294.1"/>
</dbReference>
<dbReference type="SMR" id="Q6FWV0"/>
<dbReference type="FunCoup" id="Q6FWV0">
    <property type="interactions" value="83"/>
</dbReference>
<dbReference type="STRING" id="284593.Q6FWV0"/>
<dbReference type="EnsemblFungi" id="CAGL0C02695g-T">
    <property type="protein sequence ID" value="CAGL0C02695g-T-p1"/>
    <property type="gene ID" value="CAGL0C02695g"/>
</dbReference>
<dbReference type="KEGG" id="cgr:2886928"/>
<dbReference type="CGD" id="CAL0127332">
    <property type="gene designation" value="MDM10"/>
</dbReference>
<dbReference type="VEuPathDB" id="FungiDB:CAGL0C02695g"/>
<dbReference type="eggNOG" id="ENOG502QUN5">
    <property type="taxonomic scope" value="Eukaryota"/>
</dbReference>
<dbReference type="HOGENOM" id="CLU_026505_0_0_1"/>
<dbReference type="InParanoid" id="Q6FWV0"/>
<dbReference type="OMA" id="VPGYRQI"/>
<dbReference type="Proteomes" id="UP000002428">
    <property type="component" value="Chromosome C"/>
</dbReference>
<dbReference type="GO" id="GO:0032865">
    <property type="term" value="C:ERMES complex"/>
    <property type="evidence" value="ECO:0007669"/>
    <property type="project" value="UniProtKB-UniRule"/>
</dbReference>
<dbReference type="GO" id="GO:0001401">
    <property type="term" value="C:SAM complex"/>
    <property type="evidence" value="ECO:0007669"/>
    <property type="project" value="EnsemblFungi"/>
</dbReference>
<dbReference type="GO" id="GO:0051654">
    <property type="term" value="P:establishment of mitochondrion localization"/>
    <property type="evidence" value="ECO:0007669"/>
    <property type="project" value="EnsemblFungi"/>
</dbReference>
<dbReference type="GO" id="GO:0000002">
    <property type="term" value="P:mitochondrial genome maintenance"/>
    <property type="evidence" value="ECO:0007669"/>
    <property type="project" value="UniProtKB-UniRule"/>
</dbReference>
<dbReference type="GO" id="GO:0070096">
    <property type="term" value="P:mitochondrial outer membrane translocase complex assembly"/>
    <property type="evidence" value="ECO:0007669"/>
    <property type="project" value="UniProtKB-UniRule"/>
</dbReference>
<dbReference type="GO" id="GO:1990456">
    <property type="term" value="P:mitochondrion-endoplasmic reticulum membrane tethering"/>
    <property type="evidence" value="ECO:0007669"/>
    <property type="project" value="UniProtKB-UniRule"/>
</dbReference>
<dbReference type="GO" id="GO:0007031">
    <property type="term" value="P:peroxisome organization"/>
    <property type="evidence" value="ECO:0007669"/>
    <property type="project" value="EnsemblFungi"/>
</dbReference>
<dbReference type="GO" id="GO:0015914">
    <property type="term" value="P:phospholipid transport"/>
    <property type="evidence" value="ECO:0007669"/>
    <property type="project" value="EnsemblFungi"/>
</dbReference>
<dbReference type="GO" id="GO:0045040">
    <property type="term" value="P:protein insertion into mitochondrial outer membrane"/>
    <property type="evidence" value="ECO:0007669"/>
    <property type="project" value="UniProtKB-UniRule"/>
</dbReference>
<dbReference type="HAMAP" id="MF_03102">
    <property type="entry name" value="Mdm10"/>
    <property type="match status" value="1"/>
</dbReference>
<dbReference type="InterPro" id="IPR027539">
    <property type="entry name" value="Mdm10"/>
</dbReference>
<dbReference type="PANTHER" id="PTHR28035">
    <property type="entry name" value="MITOCHONDRIAL DISTRIBUTION AND MORPHOLOGY PROTEIN 10"/>
    <property type="match status" value="1"/>
</dbReference>
<dbReference type="PANTHER" id="PTHR28035:SF1">
    <property type="entry name" value="MITOCHONDRIAL DISTRIBUTION AND MORPHOLOGY PROTEIN 10"/>
    <property type="match status" value="1"/>
</dbReference>
<dbReference type="Pfam" id="PF12519">
    <property type="entry name" value="MDM10"/>
    <property type="match status" value="1"/>
</dbReference>
<reference key="1">
    <citation type="journal article" date="2004" name="Nature">
        <title>Genome evolution in yeasts.</title>
        <authorList>
            <person name="Dujon B."/>
            <person name="Sherman D."/>
            <person name="Fischer G."/>
            <person name="Durrens P."/>
            <person name="Casaregola S."/>
            <person name="Lafontaine I."/>
            <person name="de Montigny J."/>
            <person name="Marck C."/>
            <person name="Neuveglise C."/>
            <person name="Talla E."/>
            <person name="Goffard N."/>
            <person name="Frangeul L."/>
            <person name="Aigle M."/>
            <person name="Anthouard V."/>
            <person name="Babour A."/>
            <person name="Barbe V."/>
            <person name="Barnay S."/>
            <person name="Blanchin S."/>
            <person name="Beckerich J.-M."/>
            <person name="Beyne E."/>
            <person name="Bleykasten C."/>
            <person name="Boisrame A."/>
            <person name="Boyer J."/>
            <person name="Cattolico L."/>
            <person name="Confanioleri F."/>
            <person name="de Daruvar A."/>
            <person name="Despons L."/>
            <person name="Fabre E."/>
            <person name="Fairhead C."/>
            <person name="Ferry-Dumazet H."/>
            <person name="Groppi A."/>
            <person name="Hantraye F."/>
            <person name="Hennequin C."/>
            <person name="Jauniaux N."/>
            <person name="Joyet P."/>
            <person name="Kachouri R."/>
            <person name="Kerrest A."/>
            <person name="Koszul R."/>
            <person name="Lemaire M."/>
            <person name="Lesur I."/>
            <person name="Ma L."/>
            <person name="Muller H."/>
            <person name="Nicaud J.-M."/>
            <person name="Nikolski M."/>
            <person name="Oztas S."/>
            <person name="Ozier-Kalogeropoulos O."/>
            <person name="Pellenz S."/>
            <person name="Potier S."/>
            <person name="Richard G.-F."/>
            <person name="Straub M.-L."/>
            <person name="Suleau A."/>
            <person name="Swennen D."/>
            <person name="Tekaia F."/>
            <person name="Wesolowski-Louvel M."/>
            <person name="Westhof E."/>
            <person name="Wirth B."/>
            <person name="Zeniou-Meyer M."/>
            <person name="Zivanovic Y."/>
            <person name="Bolotin-Fukuhara M."/>
            <person name="Thierry A."/>
            <person name="Bouchier C."/>
            <person name="Caudron B."/>
            <person name="Scarpelli C."/>
            <person name="Gaillardin C."/>
            <person name="Weissenbach J."/>
            <person name="Wincker P."/>
            <person name="Souciet J.-L."/>
        </authorList>
    </citation>
    <scope>NUCLEOTIDE SEQUENCE [LARGE SCALE GENOMIC DNA]</scope>
    <source>
        <strain>ATCC 2001 / BCRC 20586 / JCM 3761 / NBRC 0622 / NRRL Y-65 / CBS 138</strain>
    </source>
</reference>